<proteinExistence type="inferred from homology"/>
<protein>
    <recommendedName>
        <fullName evidence="1">o-succinylbenzoate synthase</fullName>
        <shortName evidence="1">OSB synthase</shortName>
        <shortName evidence="1">OSBS</shortName>
        <ecNumber evidence="1">4.2.1.113</ecNumber>
    </recommendedName>
    <alternativeName>
        <fullName evidence="1">4-(2'-carboxyphenyl)-4-oxybutyric acid synthase</fullName>
    </alternativeName>
    <alternativeName>
        <fullName evidence="1">o-succinylbenzoic acid synthase</fullName>
    </alternativeName>
</protein>
<accession>A4TM05</accession>
<name>MENC_YERPP</name>
<evidence type="ECO:0000255" key="1">
    <source>
        <dbReference type="HAMAP-Rule" id="MF_00470"/>
    </source>
</evidence>
<gene>
    <name evidence="1" type="primary">menC</name>
    <name type="ordered locus">YPDSF_1934</name>
</gene>
<reference key="1">
    <citation type="submission" date="2007-02" db="EMBL/GenBank/DDBJ databases">
        <title>Complete sequence of chromosome of Yersinia pestis Pestoides F.</title>
        <authorList>
            <consortium name="US DOE Joint Genome Institute"/>
            <person name="Copeland A."/>
            <person name="Lucas S."/>
            <person name="Lapidus A."/>
            <person name="Barry K."/>
            <person name="Detter J.C."/>
            <person name="Glavina del Rio T."/>
            <person name="Hammon N."/>
            <person name="Israni S."/>
            <person name="Dalin E."/>
            <person name="Tice H."/>
            <person name="Pitluck S."/>
            <person name="Di Bartolo G."/>
            <person name="Chain P."/>
            <person name="Malfatti S."/>
            <person name="Shin M."/>
            <person name="Vergez L."/>
            <person name="Schmutz J."/>
            <person name="Larimer F."/>
            <person name="Land M."/>
            <person name="Hauser L."/>
            <person name="Worsham P."/>
            <person name="Chu M."/>
            <person name="Bearden S."/>
            <person name="Garcia E."/>
            <person name="Richardson P."/>
        </authorList>
    </citation>
    <scope>NUCLEOTIDE SEQUENCE [LARGE SCALE GENOMIC DNA]</scope>
    <source>
        <strain>Pestoides F</strain>
    </source>
</reference>
<sequence>MRTATLYRYSVPMEAGVILRHQRLKSRDGLLVKLQQGELSGWGEIAPLPEFSQETLDQAQVAAECWLQHWVSGVESDDSVLPSVAFGLSCAQAELKQTLPLSADYRKAPLCTGDPDELFAVLQALPGEKVAKVKVGLYEAVRDGMIVNVLLEALPDLTLRLDANRSWSRAKADGFAKYVNPALRSRIAFLEEPCKTRAESREFAQDTGIAIAWDESVREADFQVEAEPGVAAIVIKPTLVGSLARCQQLVQQAHQAGLVAVISSSIESSLGLTQLARLAAWLTPVTVPGLDTLDLMQAQVVRPWPDSPLPLITTEQLGVVWHR</sequence>
<dbReference type="EC" id="4.2.1.113" evidence="1"/>
<dbReference type="EMBL" id="CP000668">
    <property type="protein sequence ID" value="ABP40317.1"/>
    <property type="molecule type" value="Genomic_DNA"/>
</dbReference>
<dbReference type="RefSeq" id="WP_002210244.1">
    <property type="nucleotide sequence ID" value="NZ_CP009715.1"/>
</dbReference>
<dbReference type="SMR" id="A4TM05"/>
<dbReference type="GeneID" id="57976163"/>
<dbReference type="KEGG" id="ypp:YPDSF_1934"/>
<dbReference type="PATRIC" id="fig|386656.14.peg.3395"/>
<dbReference type="UniPathway" id="UPA00079"/>
<dbReference type="UniPathway" id="UPA01057">
    <property type="reaction ID" value="UER00165"/>
</dbReference>
<dbReference type="GO" id="GO:0000287">
    <property type="term" value="F:magnesium ion binding"/>
    <property type="evidence" value="ECO:0007669"/>
    <property type="project" value="UniProtKB-UniRule"/>
</dbReference>
<dbReference type="GO" id="GO:0043748">
    <property type="term" value="F:O-succinylbenzoate synthase activity"/>
    <property type="evidence" value="ECO:0007669"/>
    <property type="project" value="UniProtKB-EC"/>
</dbReference>
<dbReference type="GO" id="GO:0009234">
    <property type="term" value="P:menaquinone biosynthetic process"/>
    <property type="evidence" value="ECO:0007669"/>
    <property type="project" value="UniProtKB-UniRule"/>
</dbReference>
<dbReference type="CDD" id="cd03320">
    <property type="entry name" value="OSBS"/>
    <property type="match status" value="1"/>
</dbReference>
<dbReference type="Gene3D" id="3.20.20.120">
    <property type="entry name" value="Enolase-like C-terminal domain"/>
    <property type="match status" value="1"/>
</dbReference>
<dbReference type="Gene3D" id="3.30.390.10">
    <property type="entry name" value="Enolase-like, N-terminal domain"/>
    <property type="match status" value="1"/>
</dbReference>
<dbReference type="HAMAP" id="MF_00470">
    <property type="entry name" value="MenC_1"/>
    <property type="match status" value="1"/>
</dbReference>
<dbReference type="InterPro" id="IPR036849">
    <property type="entry name" value="Enolase-like_C_sf"/>
</dbReference>
<dbReference type="InterPro" id="IPR029017">
    <property type="entry name" value="Enolase-like_N"/>
</dbReference>
<dbReference type="InterPro" id="IPR029065">
    <property type="entry name" value="Enolase_C-like"/>
</dbReference>
<dbReference type="InterPro" id="IPR013342">
    <property type="entry name" value="Mandelate_racemase_C"/>
</dbReference>
<dbReference type="InterPro" id="IPR010196">
    <property type="entry name" value="OSB_synthase_MenC1"/>
</dbReference>
<dbReference type="InterPro" id="IPR041338">
    <property type="entry name" value="OSBS_N"/>
</dbReference>
<dbReference type="NCBIfam" id="TIGR01927">
    <property type="entry name" value="menC_gam_Gplu"/>
    <property type="match status" value="1"/>
</dbReference>
<dbReference type="NCBIfam" id="NF003473">
    <property type="entry name" value="PRK05105.1"/>
    <property type="match status" value="1"/>
</dbReference>
<dbReference type="PANTHER" id="PTHR48073:SF2">
    <property type="entry name" value="O-SUCCINYLBENZOATE SYNTHASE"/>
    <property type="match status" value="1"/>
</dbReference>
<dbReference type="PANTHER" id="PTHR48073">
    <property type="entry name" value="O-SUCCINYLBENZOATE SYNTHASE-RELATED"/>
    <property type="match status" value="1"/>
</dbReference>
<dbReference type="Pfam" id="PF21508">
    <property type="entry name" value="MenC_N"/>
    <property type="match status" value="1"/>
</dbReference>
<dbReference type="Pfam" id="PF13378">
    <property type="entry name" value="MR_MLE_C"/>
    <property type="match status" value="1"/>
</dbReference>
<dbReference type="SFLD" id="SFLDS00001">
    <property type="entry name" value="Enolase"/>
    <property type="match status" value="1"/>
</dbReference>
<dbReference type="SFLD" id="SFLDF00009">
    <property type="entry name" value="o-succinylbenzoate_synthase"/>
    <property type="match status" value="1"/>
</dbReference>
<dbReference type="SMART" id="SM00922">
    <property type="entry name" value="MR_MLE"/>
    <property type="match status" value="1"/>
</dbReference>
<dbReference type="SUPFAM" id="SSF51604">
    <property type="entry name" value="Enolase C-terminal domain-like"/>
    <property type="match status" value="1"/>
</dbReference>
<dbReference type="SUPFAM" id="SSF54826">
    <property type="entry name" value="Enolase N-terminal domain-like"/>
    <property type="match status" value="1"/>
</dbReference>
<comment type="function">
    <text evidence="1">Converts 2-succinyl-6-hydroxy-2,4-cyclohexadiene-1-carboxylate (SHCHC) to 2-succinylbenzoate (OSB).</text>
</comment>
<comment type="catalytic activity">
    <reaction evidence="1">
        <text>(1R,6R)-6-hydroxy-2-succinyl-cyclohexa-2,4-diene-1-carboxylate = 2-succinylbenzoate + H2O</text>
        <dbReference type="Rhea" id="RHEA:10196"/>
        <dbReference type="ChEBI" id="CHEBI:15377"/>
        <dbReference type="ChEBI" id="CHEBI:18325"/>
        <dbReference type="ChEBI" id="CHEBI:58689"/>
        <dbReference type="EC" id="4.2.1.113"/>
    </reaction>
</comment>
<comment type="cofactor">
    <cofactor evidence="1">
        <name>a divalent metal cation</name>
        <dbReference type="ChEBI" id="CHEBI:60240"/>
    </cofactor>
</comment>
<comment type="pathway">
    <text evidence="1">Quinol/quinone metabolism; 1,4-dihydroxy-2-naphthoate biosynthesis; 1,4-dihydroxy-2-naphthoate from chorismate: step 4/7.</text>
</comment>
<comment type="pathway">
    <text evidence="1">Quinol/quinone metabolism; menaquinone biosynthesis.</text>
</comment>
<comment type="similarity">
    <text evidence="1">Belongs to the mandelate racemase/muconate lactonizing enzyme family. MenC type 1 subfamily.</text>
</comment>
<keyword id="KW-0456">Lyase</keyword>
<keyword id="KW-0460">Magnesium</keyword>
<keyword id="KW-0474">Menaquinone biosynthesis</keyword>
<keyword id="KW-0479">Metal-binding</keyword>
<organism>
    <name type="scientific">Yersinia pestis (strain Pestoides F)</name>
    <dbReference type="NCBI Taxonomy" id="386656"/>
    <lineage>
        <taxon>Bacteria</taxon>
        <taxon>Pseudomonadati</taxon>
        <taxon>Pseudomonadota</taxon>
        <taxon>Gammaproteobacteria</taxon>
        <taxon>Enterobacterales</taxon>
        <taxon>Yersiniaceae</taxon>
        <taxon>Yersinia</taxon>
    </lineage>
</organism>
<feature type="chain" id="PRO_1000013819" description="o-succinylbenzoate synthase">
    <location>
        <begin position="1"/>
        <end position="323"/>
    </location>
</feature>
<feature type="active site" description="Proton donor" evidence="1">
    <location>
        <position position="134"/>
    </location>
</feature>
<feature type="active site" description="Proton acceptor" evidence="1">
    <location>
        <position position="236"/>
    </location>
</feature>
<feature type="binding site" evidence="1">
    <location>
        <position position="162"/>
    </location>
    <ligand>
        <name>Mg(2+)</name>
        <dbReference type="ChEBI" id="CHEBI:18420"/>
    </ligand>
</feature>
<feature type="binding site" evidence="1">
    <location>
        <position position="191"/>
    </location>
    <ligand>
        <name>Mg(2+)</name>
        <dbReference type="ChEBI" id="CHEBI:18420"/>
    </ligand>
</feature>
<feature type="binding site" evidence="1">
    <location>
        <position position="214"/>
    </location>
    <ligand>
        <name>Mg(2+)</name>
        <dbReference type="ChEBI" id="CHEBI:18420"/>
    </ligand>
</feature>